<organism>
    <name type="scientific">Staphylococcus aureus (strain Newman)</name>
    <dbReference type="NCBI Taxonomy" id="426430"/>
    <lineage>
        <taxon>Bacteria</taxon>
        <taxon>Bacillati</taxon>
        <taxon>Bacillota</taxon>
        <taxon>Bacilli</taxon>
        <taxon>Bacillales</taxon>
        <taxon>Staphylococcaceae</taxon>
        <taxon>Staphylococcus</taxon>
    </lineage>
</organism>
<sequence length="375" mass="42544">MKWLSRILTVIVTMSMACGALIFNRRHQLKAKTLNFNHKALTIIIPARNEEKRIGHLLHSIIQQQVPVDVIVMNDGSTDETARVARSYGATVVDVVDDTDGKWYGKSHACYQGVTHACTNRIAFVDADVTFLRKDAVETLINQYQLQGEKGLLSVQPYHITKRFYEGFSAIFNLMTVVGMNVFSTLDDGRTNQHAFGPVTLTNKEDYYATGGHKSANRHIIEGFALGSAYTSQSLPVTVYEGFPFVAFRMYQEGFQSLQEGWTKHLSTGAGGTKPKIMTAIVLWLFGSIASILGLCLSLKYRQMSVRKMVALYLSYTTQFIYLHRRVGQFSNLLMVCHPLLFMFFTKIFIQSWKQTHRYGVVEWKGRQYSISKEQ</sequence>
<evidence type="ECO:0000255" key="1"/>
<evidence type="ECO:0000269" key="2">
    <source>
    </source>
</evidence>
<evidence type="ECO:0000305" key="3"/>
<feature type="chain" id="PRO_0000284857" description="4,4'-diaponeurosporenoate glycosyltransferase">
    <location>
        <begin position="1"/>
        <end position="375"/>
    </location>
</feature>
<feature type="transmembrane region" description="Helical" evidence="1">
    <location>
        <begin position="3"/>
        <end position="23"/>
    </location>
</feature>
<feature type="transmembrane region" description="Helical" evidence="1">
    <location>
        <begin position="164"/>
        <end position="184"/>
    </location>
</feature>
<feature type="transmembrane region" description="Helical" evidence="1">
    <location>
        <begin position="277"/>
        <end position="297"/>
    </location>
</feature>
<feature type="transmembrane region" description="Helical" evidence="1">
    <location>
        <begin position="330"/>
        <end position="350"/>
    </location>
</feature>
<feature type="sequence conflict" description="In Ref. 1; CAA66627." evidence="3" ref="1">
    <original>G</original>
    <variation>S</variation>
    <location>
        <position position="101"/>
    </location>
</feature>
<feature type="sequence conflict" description="In Ref. 1; CAA66627." evidence="3" ref="1">
    <original>F</original>
    <variation>C</variation>
    <location>
        <position position="243"/>
    </location>
</feature>
<reference key="1">
    <citation type="journal article" date="2005" name="J. Biol. Chem.">
        <title>Structure and biosynthesis of staphyloxanthin from Staphylococcus aureus.</title>
        <authorList>
            <person name="Pelz A."/>
            <person name="Wieland K.-P."/>
            <person name="Putzbach K."/>
            <person name="Hentschel P."/>
            <person name="Albert K."/>
            <person name="Goetz F."/>
        </authorList>
    </citation>
    <scope>NUCLEOTIDE SEQUENCE [GENOMIC DNA]</scope>
    <scope>FUNCTION</scope>
    <scope>PATHWAY</scope>
</reference>
<reference key="2">
    <citation type="journal article" date="2008" name="J. Bacteriol.">
        <title>Genome sequence of Staphylococcus aureus strain Newman and comparative analysis of staphylococcal genomes: polymorphism and evolution of two major pathogenicity islands.</title>
        <authorList>
            <person name="Baba T."/>
            <person name="Bae T."/>
            <person name="Schneewind O."/>
            <person name="Takeuchi F."/>
            <person name="Hiramatsu K."/>
        </authorList>
    </citation>
    <scope>NUCLEOTIDE SEQUENCE [LARGE SCALE GENOMIC DNA]</scope>
    <source>
        <strain>Newman</strain>
    </source>
</reference>
<protein>
    <recommendedName>
        <fullName>4,4'-diaponeurosporenoate glycosyltransferase</fullName>
        <ecNumber>2.4.1.-</ecNumber>
    </recommendedName>
</protein>
<gene>
    <name type="primary">crtQ</name>
    <name type="ordered locus">NWMN_2463</name>
</gene>
<name>CRTQ_STAAE</name>
<dbReference type="EC" id="2.4.1.-"/>
<dbReference type="EMBL" id="X97985">
    <property type="protein sequence ID" value="CAA66627.1"/>
    <property type="molecule type" value="Genomic_DNA"/>
</dbReference>
<dbReference type="EMBL" id="AP009351">
    <property type="protein sequence ID" value="BAF68735.1"/>
    <property type="molecule type" value="Genomic_DNA"/>
</dbReference>
<dbReference type="RefSeq" id="WP_000871731.1">
    <property type="nucleotide sequence ID" value="NZ_JBBIAE010000005.1"/>
</dbReference>
<dbReference type="SMR" id="Q53590"/>
<dbReference type="CAZy" id="GT2">
    <property type="family name" value="Glycosyltransferase Family 2"/>
</dbReference>
<dbReference type="KEGG" id="sae:NWMN_2463"/>
<dbReference type="HOGENOM" id="CLU_038143_1_0_9"/>
<dbReference type="BioCyc" id="MetaCyc:MONOMER-13882"/>
<dbReference type="BRENDA" id="2.4.1.B54">
    <property type="organism ID" value="3352"/>
</dbReference>
<dbReference type="UniPathway" id="UPA00029">
    <property type="reaction ID" value="UER00559"/>
</dbReference>
<dbReference type="Proteomes" id="UP000006386">
    <property type="component" value="Chromosome"/>
</dbReference>
<dbReference type="GO" id="GO:0005886">
    <property type="term" value="C:plasma membrane"/>
    <property type="evidence" value="ECO:0007669"/>
    <property type="project" value="UniProtKB-SubCell"/>
</dbReference>
<dbReference type="GO" id="GO:0016757">
    <property type="term" value="F:glycosyltransferase activity"/>
    <property type="evidence" value="ECO:0007669"/>
    <property type="project" value="UniProtKB-KW"/>
</dbReference>
<dbReference type="GO" id="GO:0016117">
    <property type="term" value="P:carotenoid biosynthetic process"/>
    <property type="evidence" value="ECO:0007669"/>
    <property type="project" value="UniProtKB-KW"/>
</dbReference>
<dbReference type="CDD" id="cd00761">
    <property type="entry name" value="Glyco_tranf_GTA_type"/>
    <property type="match status" value="1"/>
</dbReference>
<dbReference type="FunFam" id="3.90.550.10:FF:000172">
    <property type="entry name" value="Hpnb"/>
    <property type="match status" value="1"/>
</dbReference>
<dbReference type="Gene3D" id="3.90.550.10">
    <property type="entry name" value="Spore Coat Polysaccharide Biosynthesis Protein SpsA, Chain A"/>
    <property type="match status" value="1"/>
</dbReference>
<dbReference type="InterPro" id="IPR001173">
    <property type="entry name" value="Glyco_trans_2-like"/>
</dbReference>
<dbReference type="InterPro" id="IPR029044">
    <property type="entry name" value="Nucleotide-diphossugar_trans"/>
</dbReference>
<dbReference type="PANTHER" id="PTHR43646">
    <property type="entry name" value="GLYCOSYLTRANSFERASE"/>
    <property type="match status" value="1"/>
</dbReference>
<dbReference type="PANTHER" id="PTHR43646:SF2">
    <property type="entry name" value="GLYCOSYLTRANSFERASE 2-LIKE DOMAIN-CONTAINING PROTEIN"/>
    <property type="match status" value="1"/>
</dbReference>
<dbReference type="Pfam" id="PF00535">
    <property type="entry name" value="Glycos_transf_2"/>
    <property type="match status" value="1"/>
</dbReference>
<dbReference type="SUPFAM" id="SSF53448">
    <property type="entry name" value="Nucleotide-diphospho-sugar transferases"/>
    <property type="match status" value="1"/>
</dbReference>
<keyword id="KW-0125">Carotenoid biosynthesis</keyword>
<keyword id="KW-1003">Cell membrane</keyword>
<keyword id="KW-0328">Glycosyltransferase</keyword>
<keyword id="KW-0472">Membrane</keyword>
<keyword id="KW-0808">Transferase</keyword>
<keyword id="KW-0812">Transmembrane</keyword>
<keyword id="KW-1133">Transmembrane helix</keyword>
<comment type="function">
    <text evidence="2">Catalyzes the glycosylation of 4,4'-diaponeurosporenoate, i.e. the esterification of glucose at the C1'' position with the carboxyl group of 4,4'-diaponeurosporenic acid, to form glycosyl-4,4'-diaponeurosporenoate. This is a step in the biosynthesis of staphyloxanthin, an orange pigment present in most staphylococci strains.</text>
</comment>
<comment type="pathway">
    <text evidence="2">Carotenoid biosynthesis; staphyloxanthin biosynthesis; staphyloxanthin from farnesyl diphosphate: step 4/5.</text>
</comment>
<comment type="subcellular location">
    <subcellularLocation>
        <location evidence="3">Cell membrane</location>
        <topology evidence="3">Multi-pass membrane protein</topology>
    </subcellularLocation>
</comment>
<comment type="similarity">
    <text evidence="3">Belongs to the glycosyltransferase 2 family. CrtQ subfamily.</text>
</comment>
<proteinExistence type="inferred from homology"/>
<accession>Q53590</accession>
<accession>A6QK53</accession>